<protein>
    <recommendedName>
        <fullName>Histone-binding protein RBBP7</fullName>
    </recommendedName>
    <alternativeName>
        <fullName>Nucleosome-remodeling factor subunit RBAP46</fullName>
    </alternativeName>
    <alternativeName>
        <fullName>Retinoblastoma-binding protein 7</fullName>
        <shortName>RBBP-7</shortName>
    </alternativeName>
</protein>
<keyword id="KW-0007">Acetylation</keyword>
<keyword id="KW-0143">Chaperone</keyword>
<keyword id="KW-0156">Chromatin regulator</keyword>
<keyword id="KW-0235">DNA replication</keyword>
<keyword id="KW-1017">Isopeptide bond</keyword>
<keyword id="KW-0539">Nucleus</keyword>
<keyword id="KW-0597">Phosphoprotein</keyword>
<keyword id="KW-1185">Reference proteome</keyword>
<keyword id="KW-0677">Repeat</keyword>
<keyword id="KW-0678">Repressor</keyword>
<keyword id="KW-0804">Transcription</keyword>
<keyword id="KW-0805">Transcription regulation</keyword>
<keyword id="KW-0832">Ubl conjugation</keyword>
<keyword id="KW-0853">WD repeat</keyword>
<gene>
    <name type="primary">RBBP7</name>
</gene>
<comment type="function">
    <text evidence="1 2">Core histone-binding subunit that may target chromatin remodeling factors, histone acetyltransferases and histone deacetylases to their histone substrates in a manner that is regulated by nucleosomal DNA. Component of several complexes which regulate chromatin metabolism. These include the type B histone acetyltransferase (HAT) complex, which is required for chromatin assembly following DNA replication; the core histone deacetylase (HDAC) complex, which promotes histone deacetylation and consequent transcriptional repression; the nucleosome remodeling and histone deacetylase complex (the NuRD complex), which promotes transcriptional repression by histone deacetylation and nucleosome remodeling; and the PRC2/EED-EZH2 complex, which promotes repression of homeotic genes during development; and the NURF (nucleosome remodeling factor) complex (By similarity).</text>
</comment>
<comment type="subunit">
    <text evidence="1 2">Binds directly to helix 1 of the histone fold of histone H4, a region that is not accessible when H4 is in chromatin. Subunit of the type B histone acetyltransferase (HAT) complex, composed of RBBP7 and HAT1. Subunit of the core histone deacetylase (HDAC) complex, which is composed of HDAC1, HDAC2, RBBP4 and RBBP7. The core HDAC complex associates with SIN3A, ARID4B/SAP180, SAP18, SAP30, SAP130, SUDS3/SAP45 and possibly ARID4A/RBP1 and ING1 to form the SIN3 HDAC complex. Component of the nucleosome remodeling and deacetylase (NuRD) repressor complex, composed of core proteins MTA1, MTA2, MTA3, RBBP4, RBBP7, HDAC1, HDAC2, MBD2, MBD3, and peripherally associated proteins CDK2AP1, CDK2AP2, GATAD2A, GATAD2B, CHD3, CHD4 and CHD5. The exact stoichiometry of the NuRD complex is unknown, and some subunits such as MBD2 and MBD3, GATAD2A and GATAD2B, and CHD3, CHD4 and CHD5 define mutually exclusive NuRD complexes. The NuRD complex may interact with MBD3L1. The NuRD complex may interact with MBD3L2. Subunit of the PRC2/EED-EZH2 complex, which is composed of at least EED, EZH2, RBBP4, RBBP7 and SUZ12. The PRC2/EED-EZH2 complex may also associate with HDAC1. Component of the NURF-1 ISWI chromatin remodeling complex (also called the nucleosome-remodeling factor (NURF) complex) at least composed of SMARCA1, BPTF, RBBP4 and RBBP7. Within the complex interacts with SMARCA1. Component of the BPFT-SMARCA1 complex at least composed of SMARCA1, BPFT, RBBP4 and RBBP7; the complex is catalytically inactive and does not remodel chromatin. Within the complex interacts with SMARCA1. Interacts with BRCA1. Interacts with CDK2AP1 (By similarity). Interacts with CENPA. Interacts with CHD3. Interacts with CHD4. Interacts with CREBBP, and this interaction may be enhanced by the binding of phosphorylated CREB1 to CREBBP (By similarity). Interacts with HDAC7 (By similarity). Interacts with MTA1 (By similarity). Interacts with PWWP2B (By similarity). Interacts with RB1 (via viral protein-binding domain) (By similarity). Interacts with SUV39H1 (By similarity).</text>
</comment>
<comment type="subcellular location">
    <subcellularLocation>
        <location evidence="1">Nucleus</location>
    </subcellularLocation>
</comment>
<comment type="similarity">
    <text evidence="3">Belongs to the WD repeat RBAP46/RBAP48/MSI1 family.</text>
</comment>
<sequence length="425" mass="47844">MASKEMFEDTVEERVINEEYKIWKKNTPFLYDLVMTHALQWPSLTVQWLPEVTKPEGKDYALHWLVLGTHTSDEQNHLVVARVHIPNDDAQFDASHCDSEKGEFGGFGSVTGKIECEIKINHEGEVNRARYMPQNPHIIATKTPSSDVLVFDYTKHPAKPDPSGECNPDLRLRGHQKEGYGLSWNSNLSGHLLSASDDHTVCLWDINAGPKEGKIVDAKAIFTGHSAVVEDVAWHLLHESLFGSVADDQKLMIWDTRSNTTSKPSHLVDAHTAEVNCLSFNPYSEFILATGSADKTVALWDLRNLKLKLHTFESHKDEIFQVHWSPHNETILASSGTDRRLNVWDLSKIGEEQSAEDAEDGPPELLFIHGGHTAKISDFSWNPNEPWVICSVSEDNIMQIWQMAENIYNDEESDVTTPELEGQGS</sequence>
<dbReference type="EMBL" id="BC104613">
    <property type="protein sequence ID" value="AAI04614.1"/>
    <property type="molecule type" value="mRNA"/>
</dbReference>
<dbReference type="RefSeq" id="NP_001029810.1">
    <property type="nucleotide sequence ID" value="NM_001034638.1"/>
</dbReference>
<dbReference type="SMR" id="Q3SWX8"/>
<dbReference type="FunCoup" id="Q3SWX8">
    <property type="interactions" value="3295"/>
</dbReference>
<dbReference type="IntAct" id="Q3SWX8">
    <property type="interactions" value="1"/>
</dbReference>
<dbReference type="MINT" id="Q3SWX8"/>
<dbReference type="STRING" id="9913.ENSBTAP00000061182"/>
<dbReference type="PaxDb" id="9913-ENSBTAP00000029915"/>
<dbReference type="PeptideAtlas" id="Q3SWX8"/>
<dbReference type="Ensembl" id="ENSBTAT00000029923.4">
    <property type="protein sequence ID" value="ENSBTAP00000029915.2"/>
    <property type="gene ID" value="ENSBTAG00000002820.5"/>
</dbReference>
<dbReference type="GeneID" id="537402"/>
<dbReference type="KEGG" id="bta:537402"/>
<dbReference type="CTD" id="5931"/>
<dbReference type="VEuPathDB" id="HostDB:ENSBTAG00000002820"/>
<dbReference type="VGNC" id="VGNC:33772">
    <property type="gene designation" value="RBBP7"/>
</dbReference>
<dbReference type="eggNOG" id="KOG0264">
    <property type="taxonomic scope" value="Eukaryota"/>
</dbReference>
<dbReference type="GeneTree" id="ENSGT00940000154748"/>
<dbReference type="HOGENOM" id="CLU_020445_3_1_1"/>
<dbReference type="InParanoid" id="Q3SWX8"/>
<dbReference type="OMA" id="KIRAMPA"/>
<dbReference type="OrthoDB" id="427795at2759"/>
<dbReference type="TreeFam" id="TF106485"/>
<dbReference type="Reactome" id="R-BTA-212300">
    <property type="pathway name" value="PRC2 methylates histones and DNA"/>
</dbReference>
<dbReference type="Reactome" id="R-BTA-2559580">
    <property type="pathway name" value="Oxidative Stress Induced Senescence"/>
</dbReference>
<dbReference type="Reactome" id="R-BTA-3214815">
    <property type="pathway name" value="HDACs deacetylate histones"/>
</dbReference>
<dbReference type="Reactome" id="R-BTA-3214841">
    <property type="pathway name" value="PKMTs methylate histone lysines"/>
</dbReference>
<dbReference type="Reactome" id="R-BTA-3214847">
    <property type="pathway name" value="HATs acetylate histones"/>
</dbReference>
<dbReference type="Reactome" id="R-BTA-3214858">
    <property type="pathway name" value="RMTs methylate histone arginines"/>
</dbReference>
<dbReference type="Reactome" id="R-BTA-606279">
    <property type="pathway name" value="Deposition of new CENPA-containing nucleosomes at the centromere"/>
</dbReference>
<dbReference type="Reactome" id="R-BTA-6804758">
    <property type="pathway name" value="Regulation of TP53 Activity through Acetylation"/>
</dbReference>
<dbReference type="Reactome" id="R-BTA-73762">
    <property type="pathway name" value="RNA Polymerase I Transcription Initiation"/>
</dbReference>
<dbReference type="Reactome" id="R-BTA-8943724">
    <property type="pathway name" value="Regulation of PTEN gene transcription"/>
</dbReference>
<dbReference type="Reactome" id="R-BTA-8951664">
    <property type="pathway name" value="Neddylation"/>
</dbReference>
<dbReference type="Reactome" id="R-BTA-8953750">
    <property type="pathway name" value="Transcriptional Regulation by E2F6"/>
</dbReference>
<dbReference type="Proteomes" id="UP000009136">
    <property type="component" value="Chromosome X"/>
</dbReference>
<dbReference type="Bgee" id="ENSBTAG00000002820">
    <property type="expression patterns" value="Expressed in oocyte and 108 other cell types or tissues"/>
</dbReference>
<dbReference type="GO" id="GO:0035098">
    <property type="term" value="C:ESC/E(Z) complex"/>
    <property type="evidence" value="ECO:0000250"/>
    <property type="project" value="UniProtKB"/>
</dbReference>
<dbReference type="GO" id="GO:0005634">
    <property type="term" value="C:nucleus"/>
    <property type="evidence" value="ECO:0000250"/>
    <property type="project" value="UniProtKB"/>
</dbReference>
<dbReference type="GO" id="GO:0016581">
    <property type="term" value="C:NuRD complex"/>
    <property type="evidence" value="ECO:0000250"/>
    <property type="project" value="UniProtKB"/>
</dbReference>
<dbReference type="GO" id="GO:0042393">
    <property type="term" value="F:histone binding"/>
    <property type="evidence" value="ECO:0000318"/>
    <property type="project" value="GO_Central"/>
</dbReference>
<dbReference type="GO" id="GO:0070370">
    <property type="term" value="P:cellular heat acclimation"/>
    <property type="evidence" value="ECO:0000250"/>
    <property type="project" value="UniProtKB"/>
</dbReference>
<dbReference type="GO" id="GO:0006338">
    <property type="term" value="P:chromatin remodeling"/>
    <property type="evidence" value="ECO:0000318"/>
    <property type="project" value="GO_Central"/>
</dbReference>
<dbReference type="GO" id="GO:0006260">
    <property type="term" value="P:DNA replication"/>
    <property type="evidence" value="ECO:0007669"/>
    <property type="project" value="UniProtKB-KW"/>
</dbReference>
<dbReference type="GO" id="GO:0030308">
    <property type="term" value="P:negative regulation of cell growth"/>
    <property type="evidence" value="ECO:0000250"/>
    <property type="project" value="UniProtKB"/>
</dbReference>
<dbReference type="GO" id="GO:0006355">
    <property type="term" value="P:regulation of DNA-templated transcription"/>
    <property type="evidence" value="ECO:0000318"/>
    <property type="project" value="GO_Central"/>
</dbReference>
<dbReference type="FunFam" id="2.130.10.10:FF:000021">
    <property type="entry name" value="histone-binding protein RBBP4 isoform X1"/>
    <property type="match status" value="1"/>
</dbReference>
<dbReference type="Gene3D" id="2.130.10.10">
    <property type="entry name" value="YVTN repeat-like/Quinoprotein amine dehydrogenase"/>
    <property type="match status" value="1"/>
</dbReference>
<dbReference type="InterPro" id="IPR020472">
    <property type="entry name" value="G-protein_beta_WD-40_rep"/>
</dbReference>
<dbReference type="InterPro" id="IPR022052">
    <property type="entry name" value="Histone-bd_RBBP4-like_N"/>
</dbReference>
<dbReference type="InterPro" id="IPR015943">
    <property type="entry name" value="WD40/YVTN_repeat-like_dom_sf"/>
</dbReference>
<dbReference type="InterPro" id="IPR019775">
    <property type="entry name" value="WD40_repeat_CS"/>
</dbReference>
<dbReference type="InterPro" id="IPR036322">
    <property type="entry name" value="WD40_repeat_dom_sf"/>
</dbReference>
<dbReference type="InterPro" id="IPR001680">
    <property type="entry name" value="WD40_rpt"/>
</dbReference>
<dbReference type="InterPro" id="IPR050459">
    <property type="entry name" value="WD_repeat_RBAP46/RBAP48/MSI1"/>
</dbReference>
<dbReference type="PANTHER" id="PTHR22850">
    <property type="entry name" value="WD40 REPEAT FAMILY"/>
    <property type="match status" value="1"/>
</dbReference>
<dbReference type="Pfam" id="PF12265">
    <property type="entry name" value="CAF1C_H4-bd"/>
    <property type="match status" value="1"/>
</dbReference>
<dbReference type="Pfam" id="PF00400">
    <property type="entry name" value="WD40"/>
    <property type="match status" value="5"/>
</dbReference>
<dbReference type="PRINTS" id="PR00320">
    <property type="entry name" value="GPROTEINBRPT"/>
</dbReference>
<dbReference type="SMART" id="SM00320">
    <property type="entry name" value="WD40"/>
    <property type="match status" value="6"/>
</dbReference>
<dbReference type="SUPFAM" id="SSF50978">
    <property type="entry name" value="WD40 repeat-like"/>
    <property type="match status" value="1"/>
</dbReference>
<dbReference type="PROSITE" id="PS00678">
    <property type="entry name" value="WD_REPEATS_1"/>
    <property type="match status" value="3"/>
</dbReference>
<dbReference type="PROSITE" id="PS50082">
    <property type="entry name" value="WD_REPEATS_2"/>
    <property type="match status" value="5"/>
</dbReference>
<dbReference type="PROSITE" id="PS50294">
    <property type="entry name" value="WD_REPEATS_REGION"/>
    <property type="match status" value="1"/>
</dbReference>
<reference key="1">
    <citation type="submission" date="2005-09" db="EMBL/GenBank/DDBJ databases">
        <authorList>
            <consortium name="NIH - Mammalian Gene Collection (MGC) project"/>
        </authorList>
    </citation>
    <scope>NUCLEOTIDE SEQUENCE [LARGE SCALE MRNA]</scope>
    <source>
        <strain>Hereford</strain>
        <tissue>Ascending colon</tissue>
    </source>
</reference>
<name>RBBP7_BOVIN</name>
<accession>Q3SWX8</accession>
<organism>
    <name type="scientific">Bos taurus</name>
    <name type="common">Bovine</name>
    <dbReference type="NCBI Taxonomy" id="9913"/>
    <lineage>
        <taxon>Eukaryota</taxon>
        <taxon>Metazoa</taxon>
        <taxon>Chordata</taxon>
        <taxon>Craniata</taxon>
        <taxon>Vertebrata</taxon>
        <taxon>Euteleostomi</taxon>
        <taxon>Mammalia</taxon>
        <taxon>Eutheria</taxon>
        <taxon>Laurasiatheria</taxon>
        <taxon>Artiodactyla</taxon>
        <taxon>Ruminantia</taxon>
        <taxon>Pecora</taxon>
        <taxon>Bovidae</taxon>
        <taxon>Bovinae</taxon>
        <taxon>Bos</taxon>
    </lineage>
</organism>
<feature type="initiator methionine" description="Removed" evidence="1">
    <location>
        <position position="1"/>
    </location>
</feature>
<feature type="chain" id="PRO_0000223242" description="Histone-binding protein RBBP7">
    <location>
        <begin position="2"/>
        <end position="425"/>
    </location>
</feature>
<feature type="repeat" description="WD 1">
    <location>
        <begin position="47"/>
        <end position="122"/>
    </location>
</feature>
<feature type="repeat" description="WD 2">
    <location>
        <begin position="128"/>
        <end position="173"/>
    </location>
</feature>
<feature type="repeat" description="WD 3">
    <location>
        <begin position="181"/>
        <end position="217"/>
    </location>
</feature>
<feature type="repeat" description="WD 4">
    <location>
        <begin position="228"/>
        <end position="269"/>
    </location>
</feature>
<feature type="repeat" description="WD 5">
    <location>
        <begin position="275"/>
        <end position="312"/>
    </location>
</feature>
<feature type="repeat" description="WD 6">
    <location>
        <begin position="318"/>
        <end position="369"/>
    </location>
</feature>
<feature type="repeat" description="WD 7">
    <location>
        <begin position="376"/>
        <end position="403"/>
    </location>
</feature>
<feature type="modified residue" description="N-acetylalanine" evidence="1">
    <location>
        <position position="2"/>
    </location>
</feature>
<feature type="modified residue" description="Phosphoserine" evidence="1">
    <location>
        <position position="3"/>
    </location>
</feature>
<feature type="modified residue" description="N6-acetyllysine; alternate" evidence="1">
    <location>
        <position position="4"/>
    </location>
</feature>
<feature type="modified residue" description="Phosphothreonine" evidence="1">
    <location>
        <position position="10"/>
    </location>
</feature>
<feature type="modified residue" description="Phosphoserine" evidence="1">
    <location>
        <position position="95"/>
    </location>
</feature>
<feature type="modified residue" description="N6-acetyllysine" evidence="2">
    <location>
        <position position="119"/>
    </location>
</feature>
<feature type="modified residue" description="N6-acetyllysine; alternate" evidence="2">
    <location>
        <position position="159"/>
    </location>
</feature>
<feature type="modified residue" description="Phosphoserine" evidence="1">
    <location>
        <position position="354"/>
    </location>
</feature>
<feature type="cross-link" description="Glycyl lysine isopeptide (Lys-Gly) (interchain with G-Cter in SUMO2); alternate" evidence="1">
    <location>
        <position position="4"/>
    </location>
</feature>
<feature type="cross-link" description="Glycyl lysine isopeptide (Lys-Gly) (interchain with G-Cter in ubiquitin); alternate" evidence="1">
    <location>
        <position position="4"/>
    </location>
</feature>
<feature type="cross-link" description="Glycyl lysine isopeptide (Lys-Gly) (interchain with G-Cter in SUMO2)" evidence="1">
    <location>
        <position position="101"/>
    </location>
</feature>
<feature type="cross-link" description="Glycyl lysine isopeptide (Lys-Gly) (interchain with G-Cter in SUMO2)" evidence="1">
    <location>
        <position position="155"/>
    </location>
</feature>
<feature type="cross-link" description="Glycyl lysine isopeptide (Lys-Gly) (interchain with G-Cter in SUMO2); alternate" evidence="1">
    <location>
        <position position="159"/>
    </location>
</feature>
<evidence type="ECO:0000250" key="1">
    <source>
        <dbReference type="UniProtKB" id="Q16576"/>
    </source>
</evidence>
<evidence type="ECO:0000250" key="2">
    <source>
        <dbReference type="UniProtKB" id="Q60973"/>
    </source>
</evidence>
<evidence type="ECO:0000305" key="3"/>
<proteinExistence type="evidence at transcript level"/>